<sequence>MAIIPDKQDSSVLERKEQKLKPPSMYKVVLLNDDFTPMEFVVMVVQEYFKKDRETATQIMLKVHREGRGVCGVYTRDIASTKVEQVVTHARQAGHPLQCVMEEA</sequence>
<accession>A3NSC3</accession>
<comment type="function">
    <text evidence="1">Involved in the modulation of the specificity of the ClpAP-mediated ATP-dependent protein degradation.</text>
</comment>
<comment type="subunit">
    <text evidence="1">Binds to the N-terminal domain of the chaperone ClpA.</text>
</comment>
<comment type="similarity">
    <text evidence="1">Belongs to the ClpS family.</text>
</comment>
<name>CLPS_BURP0</name>
<gene>
    <name evidence="1" type="primary">clpS</name>
    <name type="ordered locus">BURPS1106A_0963</name>
</gene>
<dbReference type="EMBL" id="CP000572">
    <property type="protein sequence ID" value="ABN92532.1"/>
    <property type="molecule type" value="Genomic_DNA"/>
</dbReference>
<dbReference type="RefSeq" id="WP_004194131.1">
    <property type="nucleotide sequence ID" value="NC_009076.1"/>
</dbReference>
<dbReference type="SMR" id="A3NSC3"/>
<dbReference type="GeneID" id="93059411"/>
<dbReference type="KEGG" id="bpl:BURPS1106A_0963"/>
<dbReference type="HOGENOM" id="CLU_134358_0_0_4"/>
<dbReference type="Proteomes" id="UP000006738">
    <property type="component" value="Chromosome I"/>
</dbReference>
<dbReference type="GO" id="GO:0030163">
    <property type="term" value="P:protein catabolic process"/>
    <property type="evidence" value="ECO:0007669"/>
    <property type="project" value="InterPro"/>
</dbReference>
<dbReference type="GO" id="GO:0006508">
    <property type="term" value="P:proteolysis"/>
    <property type="evidence" value="ECO:0007669"/>
    <property type="project" value="UniProtKB-UniRule"/>
</dbReference>
<dbReference type="FunFam" id="3.30.1390.10:FF:000002">
    <property type="entry name" value="ATP-dependent Clp protease adapter protein ClpS"/>
    <property type="match status" value="1"/>
</dbReference>
<dbReference type="Gene3D" id="3.30.1390.10">
    <property type="match status" value="1"/>
</dbReference>
<dbReference type="HAMAP" id="MF_00302">
    <property type="entry name" value="ClpS"/>
    <property type="match status" value="1"/>
</dbReference>
<dbReference type="InterPro" id="IPR022935">
    <property type="entry name" value="ClpS"/>
</dbReference>
<dbReference type="InterPro" id="IPR003769">
    <property type="entry name" value="ClpS_core"/>
</dbReference>
<dbReference type="InterPro" id="IPR014719">
    <property type="entry name" value="Ribosomal_bL12_C/ClpS-like"/>
</dbReference>
<dbReference type="NCBIfam" id="NF000672">
    <property type="entry name" value="PRK00033.1-5"/>
    <property type="match status" value="1"/>
</dbReference>
<dbReference type="PANTHER" id="PTHR33473:SF19">
    <property type="entry name" value="ATP-DEPENDENT CLP PROTEASE ADAPTER PROTEIN CLPS"/>
    <property type="match status" value="1"/>
</dbReference>
<dbReference type="PANTHER" id="PTHR33473">
    <property type="entry name" value="ATP-DEPENDENT CLP PROTEASE ADAPTER PROTEIN CLPS1, CHLOROPLASTIC"/>
    <property type="match status" value="1"/>
</dbReference>
<dbReference type="Pfam" id="PF02617">
    <property type="entry name" value="ClpS"/>
    <property type="match status" value="1"/>
</dbReference>
<dbReference type="SUPFAM" id="SSF54736">
    <property type="entry name" value="ClpS-like"/>
    <property type="match status" value="1"/>
</dbReference>
<evidence type="ECO:0000255" key="1">
    <source>
        <dbReference type="HAMAP-Rule" id="MF_00302"/>
    </source>
</evidence>
<proteinExistence type="inferred from homology"/>
<protein>
    <recommendedName>
        <fullName evidence="1">ATP-dependent Clp protease adapter protein ClpS</fullName>
    </recommendedName>
</protein>
<reference key="1">
    <citation type="journal article" date="2010" name="Genome Biol. Evol.">
        <title>Continuing evolution of Burkholderia mallei through genome reduction and large-scale rearrangements.</title>
        <authorList>
            <person name="Losada L."/>
            <person name="Ronning C.M."/>
            <person name="DeShazer D."/>
            <person name="Woods D."/>
            <person name="Fedorova N."/>
            <person name="Kim H.S."/>
            <person name="Shabalina S.A."/>
            <person name="Pearson T.R."/>
            <person name="Brinkac L."/>
            <person name="Tan P."/>
            <person name="Nandi T."/>
            <person name="Crabtree J."/>
            <person name="Badger J."/>
            <person name="Beckstrom-Sternberg S."/>
            <person name="Saqib M."/>
            <person name="Schutzer S.E."/>
            <person name="Keim P."/>
            <person name="Nierman W.C."/>
        </authorList>
    </citation>
    <scope>NUCLEOTIDE SEQUENCE [LARGE SCALE GENOMIC DNA]</scope>
    <source>
        <strain>1106a</strain>
    </source>
</reference>
<feature type="chain" id="PRO_0000300699" description="ATP-dependent Clp protease adapter protein ClpS">
    <location>
        <begin position="1"/>
        <end position="104"/>
    </location>
</feature>
<organism>
    <name type="scientific">Burkholderia pseudomallei (strain 1106a)</name>
    <dbReference type="NCBI Taxonomy" id="357348"/>
    <lineage>
        <taxon>Bacteria</taxon>
        <taxon>Pseudomonadati</taxon>
        <taxon>Pseudomonadota</taxon>
        <taxon>Betaproteobacteria</taxon>
        <taxon>Burkholderiales</taxon>
        <taxon>Burkholderiaceae</taxon>
        <taxon>Burkholderia</taxon>
        <taxon>pseudomallei group</taxon>
    </lineage>
</organism>